<proteinExistence type="inferred from homology"/>
<protein>
    <recommendedName>
        <fullName evidence="1">Large ribosomal subunit protein uL6</fullName>
    </recommendedName>
    <alternativeName>
        <fullName evidence="2">50S ribosomal protein L6</fullName>
    </alternativeName>
</protein>
<evidence type="ECO:0000255" key="1">
    <source>
        <dbReference type="HAMAP-Rule" id="MF_01365"/>
    </source>
</evidence>
<evidence type="ECO:0000305" key="2"/>
<organism>
    <name type="scientific">Edwardsiella ictaluri (strain 93-146)</name>
    <dbReference type="NCBI Taxonomy" id="634503"/>
    <lineage>
        <taxon>Bacteria</taxon>
        <taxon>Pseudomonadati</taxon>
        <taxon>Pseudomonadota</taxon>
        <taxon>Gammaproteobacteria</taxon>
        <taxon>Enterobacterales</taxon>
        <taxon>Hafniaceae</taxon>
        <taxon>Edwardsiella</taxon>
    </lineage>
</organism>
<accession>C5BGL0</accession>
<feature type="chain" id="PRO_1000214926" description="Large ribosomal subunit protein uL6">
    <location>
        <begin position="1"/>
        <end position="177"/>
    </location>
</feature>
<sequence length="177" mass="18885">MSRVAKAPVVIPAGVEVKLNGQVISIKGKNGELTRTINDAVEIKHADNALTFGPRDGFVDGWAQAGTARALLNSMVIGVTEGFTKKLQLVGVGYRAAVKGNVVNLALGFSHPVDHELPAGITAECPSQTEIVLKGADKQLIGQVAADLRAYRRPEPYKGKGVRYADEVVRTKEAKKK</sequence>
<dbReference type="EMBL" id="CP001600">
    <property type="protein sequence ID" value="ACR70707.1"/>
    <property type="molecule type" value="Genomic_DNA"/>
</dbReference>
<dbReference type="RefSeq" id="WP_012850021.1">
    <property type="nucleotide sequence ID" value="NZ_CP169062.1"/>
</dbReference>
<dbReference type="SMR" id="C5BGL0"/>
<dbReference type="STRING" id="67780.B6E78_09495"/>
<dbReference type="GeneID" id="72529986"/>
<dbReference type="KEGG" id="eic:NT01EI_3579"/>
<dbReference type="HOGENOM" id="CLU_065464_1_2_6"/>
<dbReference type="OrthoDB" id="9805007at2"/>
<dbReference type="Proteomes" id="UP000001485">
    <property type="component" value="Chromosome"/>
</dbReference>
<dbReference type="GO" id="GO:0022625">
    <property type="term" value="C:cytosolic large ribosomal subunit"/>
    <property type="evidence" value="ECO:0007669"/>
    <property type="project" value="TreeGrafter"/>
</dbReference>
<dbReference type="GO" id="GO:0019843">
    <property type="term" value="F:rRNA binding"/>
    <property type="evidence" value="ECO:0007669"/>
    <property type="project" value="UniProtKB-UniRule"/>
</dbReference>
<dbReference type="GO" id="GO:0003735">
    <property type="term" value="F:structural constituent of ribosome"/>
    <property type="evidence" value="ECO:0007669"/>
    <property type="project" value="InterPro"/>
</dbReference>
<dbReference type="GO" id="GO:0002181">
    <property type="term" value="P:cytoplasmic translation"/>
    <property type="evidence" value="ECO:0007669"/>
    <property type="project" value="TreeGrafter"/>
</dbReference>
<dbReference type="FunFam" id="3.90.930.12:FF:000001">
    <property type="entry name" value="50S ribosomal protein L6"/>
    <property type="match status" value="1"/>
</dbReference>
<dbReference type="FunFam" id="3.90.930.12:FF:000002">
    <property type="entry name" value="50S ribosomal protein L6"/>
    <property type="match status" value="1"/>
</dbReference>
<dbReference type="Gene3D" id="3.90.930.12">
    <property type="entry name" value="Ribosomal protein L6, alpha-beta domain"/>
    <property type="match status" value="2"/>
</dbReference>
<dbReference type="HAMAP" id="MF_01365_B">
    <property type="entry name" value="Ribosomal_uL6_B"/>
    <property type="match status" value="1"/>
</dbReference>
<dbReference type="InterPro" id="IPR000702">
    <property type="entry name" value="Ribosomal_uL6-like"/>
</dbReference>
<dbReference type="InterPro" id="IPR036789">
    <property type="entry name" value="Ribosomal_uL6-like_a/b-dom_sf"/>
</dbReference>
<dbReference type="InterPro" id="IPR020040">
    <property type="entry name" value="Ribosomal_uL6_a/b-dom"/>
</dbReference>
<dbReference type="InterPro" id="IPR019906">
    <property type="entry name" value="Ribosomal_uL6_bac-type"/>
</dbReference>
<dbReference type="InterPro" id="IPR002358">
    <property type="entry name" value="Ribosomal_uL6_CS"/>
</dbReference>
<dbReference type="NCBIfam" id="TIGR03654">
    <property type="entry name" value="L6_bact"/>
    <property type="match status" value="1"/>
</dbReference>
<dbReference type="PANTHER" id="PTHR11655">
    <property type="entry name" value="60S/50S RIBOSOMAL PROTEIN L6/L9"/>
    <property type="match status" value="1"/>
</dbReference>
<dbReference type="PANTHER" id="PTHR11655:SF14">
    <property type="entry name" value="LARGE RIBOSOMAL SUBUNIT PROTEIN UL6M"/>
    <property type="match status" value="1"/>
</dbReference>
<dbReference type="Pfam" id="PF00347">
    <property type="entry name" value="Ribosomal_L6"/>
    <property type="match status" value="2"/>
</dbReference>
<dbReference type="PIRSF" id="PIRSF002162">
    <property type="entry name" value="Ribosomal_L6"/>
    <property type="match status" value="1"/>
</dbReference>
<dbReference type="PRINTS" id="PR00059">
    <property type="entry name" value="RIBOSOMALL6"/>
</dbReference>
<dbReference type="SUPFAM" id="SSF56053">
    <property type="entry name" value="Ribosomal protein L6"/>
    <property type="match status" value="2"/>
</dbReference>
<dbReference type="PROSITE" id="PS00525">
    <property type="entry name" value="RIBOSOMAL_L6_1"/>
    <property type="match status" value="1"/>
</dbReference>
<reference key="1">
    <citation type="submission" date="2009-03" db="EMBL/GenBank/DDBJ databases">
        <title>Complete genome sequence of Edwardsiella ictaluri 93-146.</title>
        <authorList>
            <person name="Williams M.L."/>
            <person name="Gillaspy A.F."/>
            <person name="Dyer D.W."/>
            <person name="Thune R.L."/>
            <person name="Waldbieser G.C."/>
            <person name="Schuster S.C."/>
            <person name="Gipson J."/>
            <person name="Zaitshik J."/>
            <person name="Landry C."/>
            <person name="Lawrence M.L."/>
        </authorList>
    </citation>
    <scope>NUCLEOTIDE SEQUENCE [LARGE SCALE GENOMIC DNA]</scope>
    <source>
        <strain>93-146</strain>
    </source>
</reference>
<gene>
    <name evidence="1" type="primary">rplF</name>
    <name type="ordered locus">NT01EI_3579</name>
</gene>
<keyword id="KW-0687">Ribonucleoprotein</keyword>
<keyword id="KW-0689">Ribosomal protein</keyword>
<keyword id="KW-0694">RNA-binding</keyword>
<keyword id="KW-0699">rRNA-binding</keyword>
<name>RL6_EDWI9</name>
<comment type="function">
    <text evidence="1">This protein binds to the 23S rRNA, and is important in its secondary structure. It is located near the subunit interface in the base of the L7/L12 stalk, and near the tRNA binding site of the peptidyltransferase center.</text>
</comment>
<comment type="subunit">
    <text evidence="1">Part of the 50S ribosomal subunit.</text>
</comment>
<comment type="similarity">
    <text evidence="1">Belongs to the universal ribosomal protein uL6 family.</text>
</comment>